<comment type="function">
    <text evidence="1">Catalyzes the 2-thiolation of uridine at the wobble position (U34) of tRNA, leading to the formation of s(2)U34.</text>
</comment>
<comment type="catalytic activity">
    <reaction evidence="1">
        <text>S-sulfanyl-L-cysteinyl-[protein] + uridine(34) in tRNA + AH2 + ATP = 2-thiouridine(34) in tRNA + L-cysteinyl-[protein] + A + AMP + diphosphate + H(+)</text>
        <dbReference type="Rhea" id="RHEA:47032"/>
        <dbReference type="Rhea" id="RHEA-COMP:10131"/>
        <dbReference type="Rhea" id="RHEA-COMP:11726"/>
        <dbReference type="Rhea" id="RHEA-COMP:11727"/>
        <dbReference type="Rhea" id="RHEA-COMP:11728"/>
        <dbReference type="ChEBI" id="CHEBI:13193"/>
        <dbReference type="ChEBI" id="CHEBI:15378"/>
        <dbReference type="ChEBI" id="CHEBI:17499"/>
        <dbReference type="ChEBI" id="CHEBI:29950"/>
        <dbReference type="ChEBI" id="CHEBI:30616"/>
        <dbReference type="ChEBI" id="CHEBI:33019"/>
        <dbReference type="ChEBI" id="CHEBI:61963"/>
        <dbReference type="ChEBI" id="CHEBI:65315"/>
        <dbReference type="ChEBI" id="CHEBI:87170"/>
        <dbReference type="ChEBI" id="CHEBI:456215"/>
        <dbReference type="EC" id="2.8.1.13"/>
    </reaction>
</comment>
<comment type="subcellular location">
    <subcellularLocation>
        <location evidence="1">Cytoplasm</location>
    </subcellularLocation>
</comment>
<comment type="similarity">
    <text evidence="1">Belongs to the MnmA/TRMU family.</text>
</comment>
<sequence>MSKQKVVVGMSGGVDSSVTAWLLKEQGYDVVGLFMKNWEDDDDSEYCSTRQDWIDVVSVADLIGIDVEAVNFAAEYKDRVFAEFLREYSAGRTPNPDVLCNAEIKFKAFLDHAMSLGAETIATGHYARVRQNERNGRFELLKAFDHTKDQSYFLHRLNQAQLSKTLFPLGEIPKTKVREIAEQIALPNAKKKDSTGICFIGERPFRDFLNRYLPTKPGPMKTTDGKVVGEHIGLAFYTFGQRKGIGLGGSKDGSGEPWFVAGKDIASNTLYVAQGHDHAWLLSHTLSAGNTSWVAGEPPADGFACGAKTRYRQADAPCTFSSAGSGEGLFELNFDAAQWAVTPGQSAVLYDGDVCLGGGIIEHAVTGQPVAREPQKAALLNAR</sequence>
<protein>
    <recommendedName>
        <fullName evidence="1">tRNA-specific 2-thiouridylase MnmA</fullName>
        <ecNumber evidence="1">2.8.1.13</ecNumber>
    </recommendedName>
</protein>
<name>MNMA_PARPJ</name>
<keyword id="KW-0067">ATP-binding</keyword>
<keyword id="KW-0963">Cytoplasm</keyword>
<keyword id="KW-1015">Disulfide bond</keyword>
<keyword id="KW-0547">Nucleotide-binding</keyword>
<keyword id="KW-0694">RNA-binding</keyword>
<keyword id="KW-0808">Transferase</keyword>
<keyword id="KW-0819">tRNA processing</keyword>
<keyword id="KW-0820">tRNA-binding</keyword>
<proteinExistence type="inferred from homology"/>
<dbReference type="EC" id="2.8.1.13" evidence="1"/>
<dbReference type="EMBL" id="CP001052">
    <property type="protein sequence ID" value="ACD15113.1"/>
    <property type="molecule type" value="Genomic_DNA"/>
</dbReference>
<dbReference type="RefSeq" id="WP_012431750.1">
    <property type="nucleotide sequence ID" value="NC_010681.1"/>
</dbReference>
<dbReference type="SMR" id="B2SX74"/>
<dbReference type="STRING" id="398527.Bphyt_0689"/>
<dbReference type="KEGG" id="bpy:Bphyt_0689"/>
<dbReference type="eggNOG" id="COG0482">
    <property type="taxonomic scope" value="Bacteria"/>
</dbReference>
<dbReference type="HOGENOM" id="CLU_035188_1_0_4"/>
<dbReference type="OrthoDB" id="9800696at2"/>
<dbReference type="Proteomes" id="UP000001739">
    <property type="component" value="Chromosome 1"/>
</dbReference>
<dbReference type="GO" id="GO:0005737">
    <property type="term" value="C:cytoplasm"/>
    <property type="evidence" value="ECO:0007669"/>
    <property type="project" value="UniProtKB-SubCell"/>
</dbReference>
<dbReference type="GO" id="GO:0005524">
    <property type="term" value="F:ATP binding"/>
    <property type="evidence" value="ECO:0007669"/>
    <property type="project" value="UniProtKB-KW"/>
</dbReference>
<dbReference type="GO" id="GO:0000049">
    <property type="term" value="F:tRNA binding"/>
    <property type="evidence" value="ECO:0007669"/>
    <property type="project" value="UniProtKB-KW"/>
</dbReference>
<dbReference type="GO" id="GO:0103016">
    <property type="term" value="F:tRNA-uridine 2-sulfurtransferase activity"/>
    <property type="evidence" value="ECO:0007669"/>
    <property type="project" value="UniProtKB-EC"/>
</dbReference>
<dbReference type="GO" id="GO:0002143">
    <property type="term" value="P:tRNA wobble position uridine thiolation"/>
    <property type="evidence" value="ECO:0007669"/>
    <property type="project" value="TreeGrafter"/>
</dbReference>
<dbReference type="CDD" id="cd01998">
    <property type="entry name" value="MnmA_TRMU-like"/>
    <property type="match status" value="1"/>
</dbReference>
<dbReference type="FunFam" id="2.30.30.280:FF:000001">
    <property type="entry name" value="tRNA-specific 2-thiouridylase MnmA"/>
    <property type="match status" value="1"/>
</dbReference>
<dbReference type="FunFam" id="2.40.30.10:FF:000023">
    <property type="entry name" value="tRNA-specific 2-thiouridylase MnmA"/>
    <property type="match status" value="1"/>
</dbReference>
<dbReference type="FunFam" id="3.40.50.620:FF:000004">
    <property type="entry name" value="tRNA-specific 2-thiouridylase MnmA"/>
    <property type="match status" value="1"/>
</dbReference>
<dbReference type="Gene3D" id="2.30.30.280">
    <property type="entry name" value="Adenine nucleotide alpha hydrolases-like domains"/>
    <property type="match status" value="1"/>
</dbReference>
<dbReference type="Gene3D" id="3.40.50.620">
    <property type="entry name" value="HUPs"/>
    <property type="match status" value="1"/>
</dbReference>
<dbReference type="Gene3D" id="2.40.30.10">
    <property type="entry name" value="Translation factors"/>
    <property type="match status" value="1"/>
</dbReference>
<dbReference type="HAMAP" id="MF_00144">
    <property type="entry name" value="tRNA_thiouridyl_MnmA"/>
    <property type="match status" value="1"/>
</dbReference>
<dbReference type="InterPro" id="IPR004506">
    <property type="entry name" value="MnmA-like"/>
</dbReference>
<dbReference type="InterPro" id="IPR046885">
    <property type="entry name" value="MnmA-like_C"/>
</dbReference>
<dbReference type="InterPro" id="IPR046884">
    <property type="entry name" value="MnmA-like_central"/>
</dbReference>
<dbReference type="InterPro" id="IPR023382">
    <property type="entry name" value="MnmA-like_central_sf"/>
</dbReference>
<dbReference type="InterPro" id="IPR014729">
    <property type="entry name" value="Rossmann-like_a/b/a_fold"/>
</dbReference>
<dbReference type="NCBIfam" id="NF001138">
    <property type="entry name" value="PRK00143.1"/>
    <property type="match status" value="1"/>
</dbReference>
<dbReference type="NCBIfam" id="TIGR00420">
    <property type="entry name" value="trmU"/>
    <property type="match status" value="1"/>
</dbReference>
<dbReference type="PANTHER" id="PTHR11933:SF5">
    <property type="entry name" value="MITOCHONDRIAL TRNA-SPECIFIC 2-THIOURIDYLASE 1"/>
    <property type="match status" value="1"/>
</dbReference>
<dbReference type="PANTHER" id="PTHR11933">
    <property type="entry name" value="TRNA 5-METHYLAMINOMETHYL-2-THIOURIDYLATE -METHYLTRANSFERASE"/>
    <property type="match status" value="1"/>
</dbReference>
<dbReference type="Pfam" id="PF03054">
    <property type="entry name" value="tRNA_Me_trans"/>
    <property type="match status" value="1"/>
</dbReference>
<dbReference type="Pfam" id="PF20258">
    <property type="entry name" value="tRNA_Me_trans_C"/>
    <property type="match status" value="1"/>
</dbReference>
<dbReference type="Pfam" id="PF20259">
    <property type="entry name" value="tRNA_Me_trans_M"/>
    <property type="match status" value="1"/>
</dbReference>
<dbReference type="SUPFAM" id="SSF52402">
    <property type="entry name" value="Adenine nucleotide alpha hydrolases-like"/>
    <property type="match status" value="1"/>
</dbReference>
<feature type="chain" id="PRO_1000096288" description="tRNA-specific 2-thiouridylase MnmA">
    <location>
        <begin position="1"/>
        <end position="383"/>
    </location>
</feature>
<feature type="region of interest" description="Interaction with target base in tRNA" evidence="1">
    <location>
        <begin position="95"/>
        <end position="97"/>
    </location>
</feature>
<feature type="region of interest" description="Interaction with tRNA" evidence="1">
    <location>
        <begin position="148"/>
        <end position="150"/>
    </location>
</feature>
<feature type="region of interest" description="Interaction with tRNA" evidence="1">
    <location>
        <begin position="310"/>
        <end position="311"/>
    </location>
</feature>
<feature type="active site" description="Nucleophile" evidence="1">
    <location>
        <position position="100"/>
    </location>
</feature>
<feature type="active site" description="Cysteine persulfide intermediate" evidence="1">
    <location>
        <position position="198"/>
    </location>
</feature>
<feature type="binding site" evidence="1">
    <location>
        <begin position="9"/>
        <end position="16"/>
    </location>
    <ligand>
        <name>ATP</name>
        <dbReference type="ChEBI" id="CHEBI:30616"/>
    </ligand>
</feature>
<feature type="binding site" evidence="1">
    <location>
        <position position="35"/>
    </location>
    <ligand>
        <name>ATP</name>
        <dbReference type="ChEBI" id="CHEBI:30616"/>
    </ligand>
</feature>
<feature type="binding site" evidence="1">
    <location>
        <position position="124"/>
    </location>
    <ligand>
        <name>ATP</name>
        <dbReference type="ChEBI" id="CHEBI:30616"/>
    </ligand>
</feature>
<feature type="site" description="Interaction with tRNA" evidence="1">
    <location>
        <position position="125"/>
    </location>
</feature>
<feature type="site" description="Interaction with tRNA" evidence="1">
    <location>
        <position position="345"/>
    </location>
</feature>
<feature type="disulfide bond" description="Alternate" evidence="1">
    <location>
        <begin position="100"/>
        <end position="198"/>
    </location>
</feature>
<reference key="1">
    <citation type="journal article" date="2011" name="J. Bacteriol.">
        <title>Complete genome sequence of the plant growth-promoting endophyte Burkholderia phytofirmans strain PsJN.</title>
        <authorList>
            <person name="Weilharter A."/>
            <person name="Mitter B."/>
            <person name="Shin M.V."/>
            <person name="Chain P.S."/>
            <person name="Nowak J."/>
            <person name="Sessitsch A."/>
        </authorList>
    </citation>
    <scope>NUCLEOTIDE SEQUENCE [LARGE SCALE GENOMIC DNA]</scope>
    <source>
        <strain>DSM 17436 / LMG 22146 / PsJN</strain>
    </source>
</reference>
<organism>
    <name type="scientific">Paraburkholderia phytofirmans (strain DSM 17436 / LMG 22146 / PsJN)</name>
    <name type="common">Burkholderia phytofirmans</name>
    <dbReference type="NCBI Taxonomy" id="398527"/>
    <lineage>
        <taxon>Bacteria</taxon>
        <taxon>Pseudomonadati</taxon>
        <taxon>Pseudomonadota</taxon>
        <taxon>Betaproteobacteria</taxon>
        <taxon>Burkholderiales</taxon>
        <taxon>Burkholderiaceae</taxon>
        <taxon>Paraburkholderia</taxon>
    </lineage>
</organism>
<gene>
    <name evidence="1" type="primary">mnmA</name>
    <name type="ordered locus">Bphyt_0689</name>
</gene>
<accession>B2SX74</accession>
<evidence type="ECO:0000255" key="1">
    <source>
        <dbReference type="HAMAP-Rule" id="MF_00144"/>
    </source>
</evidence>